<feature type="chain" id="PRO_0000344694" description="Large ribosomal subunit protein bL36A">
    <location>
        <begin position="1"/>
        <end position="37"/>
    </location>
</feature>
<sequence length="37" mass="4489">MRVQPSVKKICRNCKIIRRNRVVRVICTDLRHKQRQG</sequence>
<evidence type="ECO:0000255" key="1">
    <source>
        <dbReference type="HAMAP-Rule" id="MF_00251"/>
    </source>
</evidence>
<evidence type="ECO:0000305" key="2"/>
<accession>A9M3U4</accession>
<protein>
    <recommendedName>
        <fullName evidence="1">Large ribosomal subunit protein bL36A</fullName>
    </recommendedName>
    <alternativeName>
        <fullName evidence="2">50S ribosomal protein L36 1</fullName>
    </alternativeName>
</protein>
<name>RL361_NEIM0</name>
<organism>
    <name type="scientific">Neisseria meningitidis serogroup C (strain 053442)</name>
    <dbReference type="NCBI Taxonomy" id="374833"/>
    <lineage>
        <taxon>Bacteria</taxon>
        <taxon>Pseudomonadati</taxon>
        <taxon>Pseudomonadota</taxon>
        <taxon>Betaproteobacteria</taxon>
        <taxon>Neisseriales</taxon>
        <taxon>Neisseriaceae</taxon>
        <taxon>Neisseria</taxon>
    </lineage>
</organism>
<dbReference type="EMBL" id="CP000381">
    <property type="protein sequence ID" value="ABX74238.1"/>
    <property type="molecule type" value="Genomic_DNA"/>
</dbReference>
<dbReference type="SMR" id="A9M3U4"/>
<dbReference type="KEGG" id="nmn:NMCC_1987a"/>
<dbReference type="HOGENOM" id="CLU_135723_6_2_4"/>
<dbReference type="Proteomes" id="UP000001177">
    <property type="component" value="Chromosome"/>
</dbReference>
<dbReference type="GO" id="GO:0005737">
    <property type="term" value="C:cytoplasm"/>
    <property type="evidence" value="ECO:0007669"/>
    <property type="project" value="UniProtKB-ARBA"/>
</dbReference>
<dbReference type="GO" id="GO:1990904">
    <property type="term" value="C:ribonucleoprotein complex"/>
    <property type="evidence" value="ECO:0007669"/>
    <property type="project" value="UniProtKB-KW"/>
</dbReference>
<dbReference type="GO" id="GO:0005840">
    <property type="term" value="C:ribosome"/>
    <property type="evidence" value="ECO:0007669"/>
    <property type="project" value="UniProtKB-KW"/>
</dbReference>
<dbReference type="GO" id="GO:0003735">
    <property type="term" value="F:structural constituent of ribosome"/>
    <property type="evidence" value="ECO:0007669"/>
    <property type="project" value="InterPro"/>
</dbReference>
<dbReference type="GO" id="GO:0006412">
    <property type="term" value="P:translation"/>
    <property type="evidence" value="ECO:0007669"/>
    <property type="project" value="UniProtKB-UniRule"/>
</dbReference>
<dbReference type="HAMAP" id="MF_00251">
    <property type="entry name" value="Ribosomal_bL36"/>
    <property type="match status" value="1"/>
</dbReference>
<dbReference type="InterPro" id="IPR000473">
    <property type="entry name" value="Ribosomal_bL36"/>
</dbReference>
<dbReference type="InterPro" id="IPR035977">
    <property type="entry name" value="Ribosomal_bL36_sp"/>
</dbReference>
<dbReference type="NCBIfam" id="TIGR01022">
    <property type="entry name" value="rpmJ_bact"/>
    <property type="match status" value="1"/>
</dbReference>
<dbReference type="PANTHER" id="PTHR42888">
    <property type="entry name" value="50S RIBOSOMAL PROTEIN L36, CHLOROPLASTIC"/>
    <property type="match status" value="1"/>
</dbReference>
<dbReference type="PANTHER" id="PTHR42888:SF1">
    <property type="entry name" value="LARGE RIBOSOMAL SUBUNIT PROTEIN BL36C"/>
    <property type="match status" value="1"/>
</dbReference>
<dbReference type="Pfam" id="PF00444">
    <property type="entry name" value="Ribosomal_L36"/>
    <property type="match status" value="1"/>
</dbReference>
<dbReference type="SUPFAM" id="SSF57840">
    <property type="entry name" value="Ribosomal protein L36"/>
    <property type="match status" value="1"/>
</dbReference>
<dbReference type="PROSITE" id="PS00828">
    <property type="entry name" value="RIBOSOMAL_L36"/>
    <property type="match status" value="1"/>
</dbReference>
<reference key="1">
    <citation type="journal article" date="2008" name="Genomics">
        <title>Characterization of ST-4821 complex, a unique Neisseria meningitidis clone.</title>
        <authorList>
            <person name="Peng J."/>
            <person name="Yang L."/>
            <person name="Yang F."/>
            <person name="Yang J."/>
            <person name="Yan Y."/>
            <person name="Nie H."/>
            <person name="Zhang X."/>
            <person name="Xiong Z."/>
            <person name="Jiang Y."/>
            <person name="Cheng F."/>
            <person name="Xu X."/>
            <person name="Chen S."/>
            <person name="Sun L."/>
            <person name="Li W."/>
            <person name="Shen Y."/>
            <person name="Shao Z."/>
            <person name="Liang X."/>
            <person name="Xu J."/>
            <person name="Jin Q."/>
        </authorList>
    </citation>
    <scope>NUCLEOTIDE SEQUENCE [LARGE SCALE GENOMIC DNA]</scope>
    <source>
        <strain>053442</strain>
    </source>
</reference>
<gene>
    <name evidence="1" type="primary">rpmJ1</name>
    <name type="ordered locus">NMCC_1987a</name>
</gene>
<comment type="similarity">
    <text evidence="1">Belongs to the bacterial ribosomal protein bL36 family.</text>
</comment>
<proteinExistence type="inferred from homology"/>
<keyword id="KW-0687">Ribonucleoprotein</keyword>
<keyword id="KW-0689">Ribosomal protein</keyword>